<dbReference type="EC" id="2.6.1.-" evidence="5"/>
<dbReference type="EMBL" id="JX421685">
    <property type="protein sequence ID" value="AFT91392.1"/>
    <property type="molecule type" value="Genomic_DNA"/>
</dbReference>
<dbReference type="SMR" id="K0E3V3"/>
<dbReference type="BioCyc" id="MetaCyc:MONOMER-19237"/>
<dbReference type="GO" id="GO:0004084">
    <property type="term" value="F:branched-chain-amino-acid transaminase activity"/>
    <property type="evidence" value="ECO:0007669"/>
    <property type="project" value="InterPro"/>
</dbReference>
<dbReference type="GO" id="GO:0009081">
    <property type="term" value="P:branched-chain amino acid metabolic process"/>
    <property type="evidence" value="ECO:0007669"/>
    <property type="project" value="InterPro"/>
</dbReference>
<dbReference type="FunFam" id="3.30.470.10:FF:000004">
    <property type="entry name" value="Branched-chain-amino-acid aminotransferase"/>
    <property type="match status" value="1"/>
</dbReference>
<dbReference type="Gene3D" id="3.30.470.10">
    <property type="match status" value="1"/>
</dbReference>
<dbReference type="Gene3D" id="3.20.10.10">
    <property type="entry name" value="D-amino Acid Aminotransferase, subunit A, domain 2"/>
    <property type="match status" value="1"/>
</dbReference>
<dbReference type="InterPro" id="IPR001544">
    <property type="entry name" value="Aminotrans_IV"/>
</dbReference>
<dbReference type="InterPro" id="IPR036038">
    <property type="entry name" value="Aminotransferase-like"/>
</dbReference>
<dbReference type="InterPro" id="IPR005786">
    <property type="entry name" value="B_amino_transII"/>
</dbReference>
<dbReference type="InterPro" id="IPR043132">
    <property type="entry name" value="BCAT-like_C"/>
</dbReference>
<dbReference type="InterPro" id="IPR043131">
    <property type="entry name" value="BCAT-like_N"/>
</dbReference>
<dbReference type="PANTHER" id="PTHR42825">
    <property type="entry name" value="AMINO ACID AMINOTRANSFERASE"/>
    <property type="match status" value="1"/>
</dbReference>
<dbReference type="PANTHER" id="PTHR42825:SF2">
    <property type="entry name" value="BRANCHED-CHAIN-AMINO-ACID AMINOTRANSFERASE 3, CHLOROPLASTIC-RELATED"/>
    <property type="match status" value="1"/>
</dbReference>
<dbReference type="Pfam" id="PF01063">
    <property type="entry name" value="Aminotran_4"/>
    <property type="match status" value="1"/>
</dbReference>
<dbReference type="PIRSF" id="PIRSF006468">
    <property type="entry name" value="BCAT1"/>
    <property type="match status" value="1"/>
</dbReference>
<dbReference type="SUPFAM" id="SSF56752">
    <property type="entry name" value="D-aminoacid aminotransferase-like PLP-dependent enzymes"/>
    <property type="match status" value="1"/>
</dbReference>
<proteinExistence type="evidence at protein level"/>
<evidence type="ECO:0000250" key="1">
    <source>
        <dbReference type="UniProtKB" id="P19938"/>
    </source>
</evidence>
<evidence type="ECO:0000269" key="2">
    <source>
    </source>
</evidence>
<evidence type="ECO:0000303" key="3">
    <source>
    </source>
</evidence>
<evidence type="ECO:0000305" key="4"/>
<evidence type="ECO:0000305" key="5">
    <source>
    </source>
</evidence>
<gene>
    <name evidence="3" type="primary">htyB</name>
</gene>
<feature type="chain" id="PRO_0000443852" description="Transaminase htyB">
    <location>
        <begin position="1"/>
        <end position="379"/>
    </location>
</feature>
<feature type="binding site" evidence="1">
    <location>
        <position position="92"/>
    </location>
    <ligand>
        <name>pyridoxal 5'-phosphate</name>
        <dbReference type="ChEBI" id="CHEBI:597326"/>
    </ligand>
</feature>
<feature type="binding site" evidence="1">
    <location>
        <position position="239"/>
    </location>
    <ligand>
        <name>pyridoxal 5'-phosphate</name>
        <dbReference type="ChEBI" id="CHEBI:597326"/>
    </ligand>
</feature>
<feature type="modified residue" description="N6-(pyridoxal phosphate)lysine" evidence="1">
    <location>
        <position position="203"/>
    </location>
</feature>
<keyword id="KW-0032">Aminotransferase</keyword>
<keyword id="KW-0663">Pyridoxal phosphate</keyword>
<keyword id="KW-0808">Transferase</keyword>
<name>HTYB_ASPRU</name>
<organism>
    <name type="scientific">Aspergillus rugulosus</name>
    <name type="common">Emericella rugulosa</name>
    <dbReference type="NCBI Taxonomy" id="41736"/>
    <lineage>
        <taxon>Eukaryota</taxon>
        <taxon>Fungi</taxon>
        <taxon>Dikarya</taxon>
        <taxon>Ascomycota</taxon>
        <taxon>Pezizomycotina</taxon>
        <taxon>Eurotiomycetes</taxon>
        <taxon>Eurotiomycetidae</taxon>
        <taxon>Eurotiales</taxon>
        <taxon>Aspergillaceae</taxon>
        <taxon>Aspergillus</taxon>
        <taxon>Aspergillus subgen. Nidulantes</taxon>
    </lineage>
</organism>
<sequence length="379" mass="41386">MIATEYPRPPLAGIDWNHLGFEPVEVNGHIESRFSPSTKTWSTPTFIPDPYIRIHGLTPALNYGQQIFEGLKAFRTPSGSITVFRPDQNAHRFARSARAVSIPPIPTDIFLEAVHLAVGMNSEFVPPVGTGAALYIRPLAFASSATVGLALASEFLFCVYVLPVAPLHKHSGENDKDRKKRGVRALVVEDFDRAAPRGTGDVKVGGNYGPALGRIDAARQEGYGLTLHLDSQSRSLVDEFSTSGFIGVRKENDDELKLVVSDSQQIVASVTIDSICEIARGFGWAVEKRSIAFTEVSEFVEVYAAGTAAMLVPVQSVERRSTGEFIQYSVDYAEPTSVFAQLYKALSGVQQGLVPDQWGWTQEVLRPKQLASQDTEADT</sequence>
<comment type="function">
    <text evidence="2">Transaminase; part of the gene cluster that mediates the de novo generation of L-homotyrosine from acetyl-CoA and 4-hydroxyphenyl-pyruvate (PubMed:22998630). L-homotyrosine is a building block of echinocandin B, a fungal lipidated cyclic hexapeptide that acts as an antifungal agent (PubMed:22998630). L-homotyrosine 4-hydroxyphenyl-pyruvate first undergoes an aldol-type condensation by htyA with the C-2 of acetyl-CoA followed by the release of CoA to form 2-(4-hydroxybenzyl)-malate (PubMed:22998630). This is followed by isomerization of 2-(4-hydroxy-benzyl)-malate to 3-(4-hydroxybenzyl)-malate by htyD (PubMed:22998630). Thereafter, 3-(4-hydroxybenzyl)-malate undergoes decarboxylation and oxidation to form 2-oxo-4-(4-hydroxybenzyl)butanoic acid, coupled to reduction of NAD(+) to NADH by htyC (PubMed:22998630). The product then undergoes transamination catalyzed by htyB to form L-homotyrosine (PubMed:22998630).</text>
</comment>
<comment type="cofactor">
    <cofactor evidence="1">
        <name>pyridoxal 5'-phosphate</name>
        <dbReference type="ChEBI" id="CHEBI:597326"/>
    </cofactor>
</comment>
<comment type="pathway">
    <text evidence="5">Antifungal biosynthesis.</text>
</comment>
<comment type="biotechnology">
    <text evidence="2">Due to their effectiveness as antifungal agents, echinocandin derivatives can be used for the treatment of human invasive candidiasis (PubMed:22998630).</text>
</comment>
<comment type="similarity">
    <text evidence="4">Belongs to the class-IV pyridoxal-phosphate-dependent aminotransferase family.</text>
</comment>
<reference key="1">
    <citation type="journal article" date="2012" name="J. Am. Chem. Soc.">
        <title>Identification and characterization of the echinocandin B biosynthetic gene cluster from Emericella rugulosa NRRL 11440.</title>
        <authorList>
            <person name="Cacho R.A."/>
            <person name="Jiang W."/>
            <person name="Chooi Y.H."/>
            <person name="Walsh C.T."/>
            <person name="Tang Y."/>
        </authorList>
    </citation>
    <scope>NUCLEOTIDE SEQUENCE [GENOMIC DNA]</scope>
    <scope>FUNCTION</scope>
    <scope>PATHWAY</scope>
    <scope>BIOTECHNOLOGY</scope>
    <source>
        <strain>ATCC 58397 / NRRL 11440</strain>
    </source>
</reference>
<accession>K0E3V3</accession>
<protein>
    <recommendedName>
        <fullName evidence="3">Transaminase htyB</fullName>
        <ecNumber evidence="5">2.6.1.-</ecNumber>
    </recommendedName>
    <alternativeName>
        <fullName evidence="3">L-homotyrosine biosynthetic cluster protein B</fullName>
    </alternativeName>
</protein>